<sequence>MCSTRKTSVMDEKVIENEEIHFQENSNGFSADLTIHQDKLKQISKTGLNLEKEHIFNMPSSLTKAFKTAFKRKNEIFYCVSTKEMSVDIKDVSGQVYLPLITKQEIQQKLMKIDPSVRSKISMIHLGAVKILLTAQFRQGIDTSVKMALIDDRIVNRKDSLLGAARGNLAYGKFMFTVYPKFALSLQSKNLDKTLSFIHQFERKDLMKTGDKVFTVTYLIGYALTNSHHSIEYRKNSNIEIEEVFKDIGQIEESPFCDISPIDENWTMDIARNKKSIATGSSSRRNFRIDESLLENKDENLLRSMSTKIDTLGKKLSLIYDNE</sequence>
<organism>
    <name type="scientific">Figwort mosaic virus (strain DxS)</name>
    <name type="common">FMV</name>
    <dbReference type="NCBI Taxonomy" id="10650"/>
    <lineage>
        <taxon>Viruses</taxon>
        <taxon>Riboviria</taxon>
        <taxon>Pararnavirae</taxon>
        <taxon>Artverviricota</taxon>
        <taxon>Revtraviricetes</taxon>
        <taxon>Ortervirales</taxon>
        <taxon>Caulimoviridae</taxon>
        <taxon>Caulimovirus</taxon>
        <taxon>Caulimovirus tesselloscrophulariae</taxon>
    </lineage>
</organism>
<comment type="function">
    <text evidence="1">Transports viral genome to neighboring plant cells directly through plasmosdesmata, without any budding. The movement protein allows efficient cell to cell propagation, by bypassing the host cell wall barrier. Acts by forming tubules structures that increase the size exclusion limit (SEL) of plasmodesmata, thereby allowing viral ribonucleocapsids to spread directly to neighboring cells (By similarity).</text>
</comment>
<comment type="subunit">
    <text evidence="1">Homotrimer, through the coiled-coil domain. Interacts with VAP.</text>
</comment>
<comment type="subcellular location">
    <subcellularLocation>
        <location evidence="1">Host cell junction</location>
        <location evidence="1">Host plasmodesma</location>
    </subcellularLocation>
    <text>Assembles in tubules that are embedded within modified plasmodesmata.</text>
</comment>
<comment type="similarity">
    <text evidence="2">Belongs to the caulimoviridae movement protein family.</text>
</comment>
<reference key="1">
    <citation type="journal article" date="1987" name="Nucleic Acids Res.">
        <title>Sequence of figwort mosaic virus DNA (caulimovirus group).</title>
        <authorList>
            <person name="Richins R.D."/>
            <person name="Scholthof H.B."/>
            <person name="Shepherd R.J."/>
        </authorList>
    </citation>
    <scope>NUCLEOTIDE SEQUENCE [GENOMIC DNA]</scope>
</reference>
<feature type="chain" id="PRO_0000222065" description="Movement protein">
    <location>
        <begin position="1"/>
        <end position="323"/>
    </location>
</feature>
<feature type="coiled-coil region" evidence="1">
    <location>
        <begin position="292"/>
        <end position="322"/>
    </location>
</feature>
<protein>
    <recommendedName>
        <fullName>Movement protein</fullName>
        <shortName>Mov</shortName>
    </recommendedName>
    <alternativeName>
        <fullName>Cell-to-cell transport protein</fullName>
    </alternativeName>
</protein>
<accession>P09520</accession>
<proteinExistence type="inferred from homology"/>
<dbReference type="EMBL" id="X06166">
    <property type="protein sequence ID" value="CAA29523.1"/>
    <property type="molecule type" value="Genomic_DNA"/>
</dbReference>
<dbReference type="PIR" id="S01279">
    <property type="entry name" value="S01279"/>
</dbReference>
<dbReference type="RefSeq" id="NP_619544.1">
    <property type="nucleotide sequence ID" value="NC_003554.1"/>
</dbReference>
<dbReference type="KEGG" id="vg:940161"/>
<dbReference type="Proteomes" id="UP000008622">
    <property type="component" value="Segment"/>
</dbReference>
<dbReference type="GO" id="GO:0044219">
    <property type="term" value="C:host cell plasmodesma"/>
    <property type="evidence" value="ECO:0007669"/>
    <property type="project" value="UniProtKB-SubCell"/>
</dbReference>
<dbReference type="GO" id="GO:0046740">
    <property type="term" value="P:transport of virus in host, cell to cell"/>
    <property type="evidence" value="ECO:0007669"/>
    <property type="project" value="UniProtKB-KW"/>
</dbReference>
<dbReference type="InterPro" id="IPR051596">
    <property type="entry name" value="Caulimoviridae_Movement"/>
</dbReference>
<dbReference type="InterPro" id="IPR028919">
    <property type="entry name" value="Viral_movement"/>
</dbReference>
<dbReference type="PANTHER" id="PTHR47599">
    <property type="entry name" value="CELL-TO-CELL MOVEMENT PROTEIN"/>
    <property type="match status" value="1"/>
</dbReference>
<dbReference type="PANTHER" id="PTHR47599:SF3">
    <property type="entry name" value="CELL-TO-CELL MOVEMENT PROTEIN"/>
    <property type="match status" value="1"/>
</dbReference>
<dbReference type="Pfam" id="PF01107">
    <property type="entry name" value="MP"/>
    <property type="match status" value="1"/>
</dbReference>
<keyword id="KW-0175">Coiled coil</keyword>
<keyword id="KW-1031">Host cell junction</keyword>
<keyword id="KW-1185">Reference proteome</keyword>
<keyword id="KW-0813">Transport</keyword>
<keyword id="KW-0916">Viral movement protein</keyword>
<evidence type="ECO:0000250" key="1"/>
<evidence type="ECO:0000305" key="2"/>
<organismHost>
    <name type="scientific">Scrophularia californica</name>
    <name type="common">California bee plant</name>
    <dbReference type="NCBI Taxonomy" id="46031"/>
</organismHost>
<gene>
    <name type="ORF">ORF I</name>
</gene>
<name>MVP_FMVD</name>